<reference key="1">
    <citation type="journal article" date="2007" name="PLoS Genet.">
        <title>The complete genome sequence of Yersinia pseudotuberculosis IP31758, the causative agent of Far East scarlet-like fever.</title>
        <authorList>
            <person name="Eppinger M."/>
            <person name="Rosovitz M.J."/>
            <person name="Fricke W.F."/>
            <person name="Rasko D.A."/>
            <person name="Kokorina G."/>
            <person name="Fayolle C."/>
            <person name="Lindler L.E."/>
            <person name="Carniel E."/>
            <person name="Ravel J."/>
        </authorList>
    </citation>
    <scope>NUCLEOTIDE SEQUENCE [LARGE SCALE GENOMIC DNA]</scope>
    <source>
        <strain>IP 31758</strain>
    </source>
</reference>
<sequence length="572" mass="61019">MPQISRQEYAGLFGPTTGDKIRLGDTNLFIEIEKDLRGYGEESVYGGGKSLRDGMGANNNLTRDNGVLDLVITNVTIVDARLGVIKADVGIRDGKIAGIGKSGNPGVMDGVTQGMVVGVSTDAISGEHLILTAAGIDSHIHLISPQQAYHALSNGVATFFGGGIGPTDGTNGTTVTPGPWNIRQMLRSIEGLPVNVGILGKGNSYGRGPLLEQAIAGVVGYKVHEDWGATANALRHALRMADEVDIQVSVHTDSLNECGYVEDTIDAFEGRTIHTFHTEGAGGGHAPDIIRVASQTNVLPSSTNPTLPYGVNSQAELFDMIMVCHNLNPNVPADVSFAESRVRPETIAAENVLHDMGVISMFSSDSQAMGRVGENWLRILQTADAMKAARGKLPEDAAGNDNFRVLRYVAKITINPAITQGVSHVIGSVEVGKMADLVLWDPRFFGAKPKMVIKGGMINWAAMGDPNASLPTPQPVFYRPMFGAMGKTLQDTCVTFVSQAALDDGVKEKAGLDRQVIAVKNCRTISKRDLVRNDQTPNIEVDPETFAVKVDGVHATCEPIATASMNQRYFFG</sequence>
<gene>
    <name evidence="1" type="primary">ureC</name>
    <name type="ordered locus">YpsIP31758_1079</name>
</gene>
<evidence type="ECO:0000255" key="1">
    <source>
        <dbReference type="HAMAP-Rule" id="MF_01953"/>
    </source>
</evidence>
<comment type="catalytic activity">
    <reaction evidence="1">
        <text>urea + 2 H2O + H(+) = hydrogencarbonate + 2 NH4(+)</text>
        <dbReference type="Rhea" id="RHEA:20557"/>
        <dbReference type="ChEBI" id="CHEBI:15377"/>
        <dbReference type="ChEBI" id="CHEBI:15378"/>
        <dbReference type="ChEBI" id="CHEBI:16199"/>
        <dbReference type="ChEBI" id="CHEBI:17544"/>
        <dbReference type="ChEBI" id="CHEBI:28938"/>
        <dbReference type="EC" id="3.5.1.5"/>
    </reaction>
</comment>
<comment type="cofactor">
    <cofactor evidence="1">
        <name>Ni cation</name>
        <dbReference type="ChEBI" id="CHEBI:25516"/>
    </cofactor>
    <text evidence="1">Binds 2 nickel ions per subunit.</text>
</comment>
<comment type="pathway">
    <text evidence="1">Nitrogen metabolism; urea degradation; CO(2) and NH(3) from urea (urease route): step 1/1.</text>
</comment>
<comment type="subunit">
    <text evidence="1">Heterotrimer of UreA (gamma), UreB (beta) and UreC (alpha) subunits. Three heterotrimers associate to form the active enzyme.</text>
</comment>
<comment type="subcellular location">
    <subcellularLocation>
        <location evidence="1">Cytoplasm</location>
    </subcellularLocation>
</comment>
<comment type="PTM">
    <text evidence="1">Carboxylation allows a single lysine to coordinate two nickel ions.</text>
</comment>
<comment type="similarity">
    <text evidence="1">Belongs to the metallo-dependent hydrolases superfamily. Urease alpha subunit family.</text>
</comment>
<keyword id="KW-0963">Cytoplasm</keyword>
<keyword id="KW-0378">Hydrolase</keyword>
<keyword id="KW-0479">Metal-binding</keyword>
<keyword id="KW-0533">Nickel</keyword>
<protein>
    <recommendedName>
        <fullName evidence="1">Urease subunit alpha</fullName>
        <ecNumber evidence="1">3.5.1.5</ecNumber>
    </recommendedName>
    <alternativeName>
        <fullName evidence="1">Urea amidohydrolase subunit alpha</fullName>
    </alternativeName>
</protein>
<dbReference type="EC" id="3.5.1.5" evidence="1"/>
<dbReference type="EMBL" id="CP000720">
    <property type="protein sequence ID" value="ABS47961.1"/>
    <property type="molecule type" value="Genomic_DNA"/>
</dbReference>
<dbReference type="RefSeq" id="WP_002212229.1">
    <property type="nucleotide sequence ID" value="NC_009708.1"/>
</dbReference>
<dbReference type="SMR" id="A7FFN2"/>
<dbReference type="KEGG" id="ypi:YpsIP31758_1079"/>
<dbReference type="HOGENOM" id="CLU_000980_0_0_6"/>
<dbReference type="UniPathway" id="UPA00258">
    <property type="reaction ID" value="UER00370"/>
</dbReference>
<dbReference type="Proteomes" id="UP000002412">
    <property type="component" value="Chromosome"/>
</dbReference>
<dbReference type="GO" id="GO:0005737">
    <property type="term" value="C:cytoplasm"/>
    <property type="evidence" value="ECO:0007669"/>
    <property type="project" value="UniProtKB-SubCell"/>
</dbReference>
<dbReference type="GO" id="GO:0016151">
    <property type="term" value="F:nickel cation binding"/>
    <property type="evidence" value="ECO:0007669"/>
    <property type="project" value="UniProtKB-UniRule"/>
</dbReference>
<dbReference type="GO" id="GO:0009039">
    <property type="term" value="F:urease activity"/>
    <property type="evidence" value="ECO:0007669"/>
    <property type="project" value="UniProtKB-UniRule"/>
</dbReference>
<dbReference type="GO" id="GO:0043419">
    <property type="term" value="P:urea catabolic process"/>
    <property type="evidence" value="ECO:0007669"/>
    <property type="project" value="UniProtKB-UniRule"/>
</dbReference>
<dbReference type="CDD" id="cd00375">
    <property type="entry name" value="Urease_alpha"/>
    <property type="match status" value="1"/>
</dbReference>
<dbReference type="Gene3D" id="3.20.20.140">
    <property type="entry name" value="Metal-dependent hydrolases"/>
    <property type="match status" value="1"/>
</dbReference>
<dbReference type="Gene3D" id="2.30.40.10">
    <property type="entry name" value="Urease, subunit C, domain 1"/>
    <property type="match status" value="1"/>
</dbReference>
<dbReference type="HAMAP" id="MF_01953">
    <property type="entry name" value="Urease_alpha"/>
    <property type="match status" value="1"/>
</dbReference>
<dbReference type="InterPro" id="IPR006680">
    <property type="entry name" value="Amidohydro-rel"/>
</dbReference>
<dbReference type="InterPro" id="IPR011059">
    <property type="entry name" value="Metal-dep_hydrolase_composite"/>
</dbReference>
<dbReference type="InterPro" id="IPR032466">
    <property type="entry name" value="Metal_Hydrolase"/>
</dbReference>
<dbReference type="InterPro" id="IPR011612">
    <property type="entry name" value="Urease_alpha_N_dom"/>
</dbReference>
<dbReference type="InterPro" id="IPR050112">
    <property type="entry name" value="Urease_alpha_subunit"/>
</dbReference>
<dbReference type="InterPro" id="IPR017950">
    <property type="entry name" value="Urease_AS"/>
</dbReference>
<dbReference type="InterPro" id="IPR005848">
    <property type="entry name" value="Urease_asu"/>
</dbReference>
<dbReference type="InterPro" id="IPR017951">
    <property type="entry name" value="Urease_asu_c"/>
</dbReference>
<dbReference type="InterPro" id="IPR029754">
    <property type="entry name" value="Urease_Ni-bd"/>
</dbReference>
<dbReference type="NCBIfam" id="NF009686">
    <property type="entry name" value="PRK13207.1"/>
    <property type="match status" value="1"/>
</dbReference>
<dbReference type="NCBIfam" id="NF009834">
    <property type="entry name" value="PRK13309.1"/>
    <property type="match status" value="1"/>
</dbReference>
<dbReference type="NCBIfam" id="TIGR01792">
    <property type="entry name" value="urease_alph"/>
    <property type="match status" value="1"/>
</dbReference>
<dbReference type="PANTHER" id="PTHR43440">
    <property type="entry name" value="UREASE"/>
    <property type="match status" value="1"/>
</dbReference>
<dbReference type="PANTHER" id="PTHR43440:SF1">
    <property type="entry name" value="UREASE"/>
    <property type="match status" value="1"/>
</dbReference>
<dbReference type="Pfam" id="PF01979">
    <property type="entry name" value="Amidohydro_1"/>
    <property type="match status" value="1"/>
</dbReference>
<dbReference type="Pfam" id="PF00449">
    <property type="entry name" value="Urease_alpha"/>
    <property type="match status" value="1"/>
</dbReference>
<dbReference type="PRINTS" id="PR01752">
    <property type="entry name" value="UREASE"/>
</dbReference>
<dbReference type="SUPFAM" id="SSF51338">
    <property type="entry name" value="Composite domain of metallo-dependent hydrolases"/>
    <property type="match status" value="1"/>
</dbReference>
<dbReference type="SUPFAM" id="SSF51556">
    <property type="entry name" value="Metallo-dependent hydrolases"/>
    <property type="match status" value="1"/>
</dbReference>
<dbReference type="PROSITE" id="PS01120">
    <property type="entry name" value="UREASE_1"/>
    <property type="match status" value="1"/>
</dbReference>
<dbReference type="PROSITE" id="PS00145">
    <property type="entry name" value="UREASE_2"/>
    <property type="match status" value="1"/>
</dbReference>
<dbReference type="PROSITE" id="PS51368">
    <property type="entry name" value="UREASE_3"/>
    <property type="match status" value="1"/>
</dbReference>
<accession>A7FFN2</accession>
<organism>
    <name type="scientific">Yersinia pseudotuberculosis serotype O:1b (strain IP 31758)</name>
    <dbReference type="NCBI Taxonomy" id="349747"/>
    <lineage>
        <taxon>Bacteria</taxon>
        <taxon>Pseudomonadati</taxon>
        <taxon>Pseudomonadota</taxon>
        <taxon>Gammaproteobacteria</taxon>
        <taxon>Enterobacterales</taxon>
        <taxon>Yersiniaceae</taxon>
        <taxon>Yersinia</taxon>
    </lineage>
</organism>
<proteinExistence type="inferred from homology"/>
<name>URE1_YERP3</name>
<feature type="chain" id="PRO_1000070705" description="Urease subunit alpha">
    <location>
        <begin position="1"/>
        <end position="572"/>
    </location>
</feature>
<feature type="domain" description="Urease" evidence="1">
    <location>
        <begin position="134"/>
        <end position="572"/>
    </location>
</feature>
<feature type="active site" description="Proton donor" evidence="1">
    <location>
        <position position="325"/>
    </location>
</feature>
<feature type="binding site" evidence="1">
    <location>
        <position position="139"/>
    </location>
    <ligand>
        <name>Ni(2+)</name>
        <dbReference type="ChEBI" id="CHEBI:49786"/>
        <label>1</label>
    </ligand>
</feature>
<feature type="binding site" evidence="1">
    <location>
        <position position="141"/>
    </location>
    <ligand>
        <name>Ni(2+)</name>
        <dbReference type="ChEBI" id="CHEBI:49786"/>
        <label>1</label>
    </ligand>
</feature>
<feature type="binding site" description="via carbamate group" evidence="1">
    <location>
        <position position="222"/>
    </location>
    <ligand>
        <name>Ni(2+)</name>
        <dbReference type="ChEBI" id="CHEBI:49786"/>
        <label>1</label>
    </ligand>
</feature>
<feature type="binding site" description="via carbamate group" evidence="1">
    <location>
        <position position="222"/>
    </location>
    <ligand>
        <name>Ni(2+)</name>
        <dbReference type="ChEBI" id="CHEBI:49786"/>
        <label>2</label>
    </ligand>
</feature>
<feature type="binding site" evidence="1">
    <location>
        <position position="224"/>
    </location>
    <ligand>
        <name>substrate</name>
    </ligand>
</feature>
<feature type="binding site" evidence="1">
    <location>
        <position position="251"/>
    </location>
    <ligand>
        <name>Ni(2+)</name>
        <dbReference type="ChEBI" id="CHEBI:49786"/>
        <label>2</label>
    </ligand>
</feature>
<feature type="binding site" evidence="1">
    <location>
        <position position="277"/>
    </location>
    <ligand>
        <name>Ni(2+)</name>
        <dbReference type="ChEBI" id="CHEBI:49786"/>
        <label>2</label>
    </ligand>
</feature>
<feature type="binding site" evidence="1">
    <location>
        <position position="365"/>
    </location>
    <ligand>
        <name>Ni(2+)</name>
        <dbReference type="ChEBI" id="CHEBI:49786"/>
        <label>1</label>
    </ligand>
</feature>
<feature type="modified residue" description="N6-carboxylysine" evidence="1">
    <location>
        <position position="222"/>
    </location>
</feature>